<reference key="1">
    <citation type="journal article" date="2002" name="Genome Res.">
        <title>A complete sequence of the T. tengcongensis genome.</title>
        <authorList>
            <person name="Bao Q."/>
            <person name="Tian Y."/>
            <person name="Li W."/>
            <person name="Xu Z."/>
            <person name="Xuan Z."/>
            <person name="Hu S."/>
            <person name="Dong W."/>
            <person name="Yang J."/>
            <person name="Chen Y."/>
            <person name="Xue Y."/>
            <person name="Xu Y."/>
            <person name="Lai X."/>
            <person name="Huang L."/>
            <person name="Dong X."/>
            <person name="Ma Y."/>
            <person name="Ling L."/>
            <person name="Tan H."/>
            <person name="Chen R."/>
            <person name="Wang J."/>
            <person name="Yu J."/>
            <person name="Yang H."/>
        </authorList>
    </citation>
    <scope>NUCLEOTIDE SEQUENCE [LARGE SCALE GENOMIC DNA]</scope>
    <source>
        <strain>DSM 15242 / JCM 11007 / NBRC 100824 / MB4</strain>
    </source>
</reference>
<organism>
    <name type="scientific">Caldanaerobacter subterraneus subsp. tengcongensis (strain DSM 15242 / JCM 11007 / NBRC 100824 / MB4)</name>
    <name type="common">Thermoanaerobacter tengcongensis</name>
    <dbReference type="NCBI Taxonomy" id="273068"/>
    <lineage>
        <taxon>Bacteria</taxon>
        <taxon>Bacillati</taxon>
        <taxon>Bacillota</taxon>
        <taxon>Clostridia</taxon>
        <taxon>Thermoanaerobacterales</taxon>
        <taxon>Thermoanaerobacteraceae</taxon>
        <taxon>Caldanaerobacter</taxon>
    </lineage>
</organism>
<protein>
    <recommendedName>
        <fullName evidence="1">UDP-N-acetylglucosamine 1-carboxyvinyltransferase 1</fullName>
        <ecNumber evidence="1">2.5.1.7</ecNumber>
    </recommendedName>
    <alternativeName>
        <fullName evidence="1">Enoylpyruvate transferase 1</fullName>
    </alternativeName>
    <alternativeName>
        <fullName evidence="1">UDP-N-acetylglucosamine enolpyruvyl transferase 1</fullName>
        <shortName evidence="1">EPT 1</shortName>
    </alternativeName>
</protein>
<evidence type="ECO:0000255" key="1">
    <source>
        <dbReference type="HAMAP-Rule" id="MF_00111"/>
    </source>
</evidence>
<comment type="function">
    <text evidence="1">Cell wall formation. Adds enolpyruvyl to UDP-N-acetylglucosamine.</text>
</comment>
<comment type="catalytic activity">
    <reaction evidence="1">
        <text>phosphoenolpyruvate + UDP-N-acetyl-alpha-D-glucosamine = UDP-N-acetyl-3-O-(1-carboxyvinyl)-alpha-D-glucosamine + phosphate</text>
        <dbReference type="Rhea" id="RHEA:18681"/>
        <dbReference type="ChEBI" id="CHEBI:43474"/>
        <dbReference type="ChEBI" id="CHEBI:57705"/>
        <dbReference type="ChEBI" id="CHEBI:58702"/>
        <dbReference type="ChEBI" id="CHEBI:68483"/>
        <dbReference type="EC" id="2.5.1.7"/>
    </reaction>
</comment>
<comment type="pathway">
    <text evidence="1">Cell wall biogenesis; peptidoglycan biosynthesis.</text>
</comment>
<comment type="subcellular location">
    <subcellularLocation>
        <location evidence="1">Cytoplasm</location>
    </subcellularLocation>
</comment>
<comment type="similarity">
    <text evidence="1">Belongs to the EPSP synthase family. MurA subfamily.</text>
</comment>
<gene>
    <name evidence="1" type="primary">murA1</name>
    <name type="ordered locus">TTE0158</name>
</gene>
<feature type="chain" id="PRO_0000178944" description="UDP-N-acetylglucosamine 1-carboxyvinyltransferase 1">
    <location>
        <begin position="1"/>
        <end position="415"/>
    </location>
</feature>
<feature type="active site" description="Proton donor" evidence="1">
    <location>
        <position position="116"/>
    </location>
</feature>
<feature type="binding site" evidence="1">
    <location>
        <begin position="23"/>
        <end position="24"/>
    </location>
    <ligand>
        <name>phosphoenolpyruvate</name>
        <dbReference type="ChEBI" id="CHEBI:58702"/>
    </ligand>
</feature>
<feature type="binding site" evidence="1">
    <location>
        <position position="92"/>
    </location>
    <ligand>
        <name>UDP-N-acetyl-alpha-D-glucosamine</name>
        <dbReference type="ChEBI" id="CHEBI:57705"/>
    </ligand>
</feature>
<feature type="binding site" evidence="1">
    <location>
        <begin position="121"/>
        <end position="125"/>
    </location>
    <ligand>
        <name>UDP-N-acetyl-alpha-D-glucosamine</name>
        <dbReference type="ChEBI" id="CHEBI:57705"/>
    </ligand>
</feature>
<feature type="binding site" evidence="1">
    <location>
        <position position="304"/>
    </location>
    <ligand>
        <name>UDP-N-acetyl-alpha-D-glucosamine</name>
        <dbReference type="ChEBI" id="CHEBI:57705"/>
    </ligand>
</feature>
<feature type="binding site" evidence="1">
    <location>
        <position position="326"/>
    </location>
    <ligand>
        <name>UDP-N-acetyl-alpha-D-glucosamine</name>
        <dbReference type="ChEBI" id="CHEBI:57705"/>
    </ligand>
</feature>
<feature type="modified residue" description="2-(S-cysteinyl)pyruvic acid O-phosphothioketal" evidence="1">
    <location>
        <position position="116"/>
    </location>
</feature>
<sequence length="415" mass="44670">MKTKFVVEKSPPLKGTVKISGAKNSVLPIIAASLLSSDEVILEDIPSLEDVNVMIELIKNFGALCELDNGKLKIKVDIKDVEAPYELVKKMRASFLVMGPILAKLGHAKISMPGGCAIGARPIDLHLKGFQSLGADITIGHGYVEARAKKLTGKKIYLDFPSVGATENIMMAAVFADGVTVIENAAEEPEIVDLANFLNKMGANIKGAGTDTIRIEGVKELKGAEHTVIPDRIEAGTFMVAAAMTGGNVLIENVIVDHVRSVIAKLTECGVKITEEKGGLRVKGVKNYKAVDIKTLPYPGFPTDMQAQMMAMMTVAKGTSVIIETVFENRFMHVSELKRMGANIKIEGRSAMITGVDHLTGAEVKATDLRAGAALVLAGLIAEGRTEINDIYHVDRGYVKMEEKLRALGAKIYRK</sequence>
<name>MURA1_CALS4</name>
<dbReference type="EC" id="2.5.1.7" evidence="1"/>
<dbReference type="EMBL" id="AE008691">
    <property type="protein sequence ID" value="AAM23459.1"/>
    <property type="molecule type" value="Genomic_DNA"/>
</dbReference>
<dbReference type="SMR" id="Q8RD88"/>
<dbReference type="STRING" id="273068.TTE0158"/>
<dbReference type="KEGG" id="tte:TTE0158"/>
<dbReference type="eggNOG" id="COG0766">
    <property type="taxonomic scope" value="Bacteria"/>
</dbReference>
<dbReference type="HOGENOM" id="CLU_027387_0_0_9"/>
<dbReference type="UniPathway" id="UPA00219"/>
<dbReference type="Proteomes" id="UP000000555">
    <property type="component" value="Chromosome"/>
</dbReference>
<dbReference type="GO" id="GO:0005737">
    <property type="term" value="C:cytoplasm"/>
    <property type="evidence" value="ECO:0007669"/>
    <property type="project" value="UniProtKB-SubCell"/>
</dbReference>
<dbReference type="GO" id="GO:0008760">
    <property type="term" value="F:UDP-N-acetylglucosamine 1-carboxyvinyltransferase activity"/>
    <property type="evidence" value="ECO:0007669"/>
    <property type="project" value="UniProtKB-UniRule"/>
</dbReference>
<dbReference type="GO" id="GO:0051301">
    <property type="term" value="P:cell division"/>
    <property type="evidence" value="ECO:0007669"/>
    <property type="project" value="UniProtKB-KW"/>
</dbReference>
<dbReference type="GO" id="GO:0071555">
    <property type="term" value="P:cell wall organization"/>
    <property type="evidence" value="ECO:0007669"/>
    <property type="project" value="UniProtKB-KW"/>
</dbReference>
<dbReference type="GO" id="GO:0009252">
    <property type="term" value="P:peptidoglycan biosynthetic process"/>
    <property type="evidence" value="ECO:0007669"/>
    <property type="project" value="UniProtKB-UniRule"/>
</dbReference>
<dbReference type="GO" id="GO:0008360">
    <property type="term" value="P:regulation of cell shape"/>
    <property type="evidence" value="ECO:0007669"/>
    <property type="project" value="UniProtKB-KW"/>
</dbReference>
<dbReference type="GO" id="GO:0019277">
    <property type="term" value="P:UDP-N-acetylgalactosamine biosynthetic process"/>
    <property type="evidence" value="ECO:0007669"/>
    <property type="project" value="InterPro"/>
</dbReference>
<dbReference type="CDD" id="cd01555">
    <property type="entry name" value="UdpNAET"/>
    <property type="match status" value="1"/>
</dbReference>
<dbReference type="FunFam" id="3.65.10.10:FF:000001">
    <property type="entry name" value="UDP-N-acetylglucosamine 1-carboxyvinyltransferase"/>
    <property type="match status" value="1"/>
</dbReference>
<dbReference type="Gene3D" id="3.65.10.10">
    <property type="entry name" value="Enolpyruvate transferase domain"/>
    <property type="match status" value="2"/>
</dbReference>
<dbReference type="HAMAP" id="MF_00111">
    <property type="entry name" value="MurA"/>
    <property type="match status" value="1"/>
</dbReference>
<dbReference type="InterPro" id="IPR001986">
    <property type="entry name" value="Enolpyruvate_Tfrase_dom"/>
</dbReference>
<dbReference type="InterPro" id="IPR036968">
    <property type="entry name" value="Enolpyruvate_Tfrase_sf"/>
</dbReference>
<dbReference type="InterPro" id="IPR050068">
    <property type="entry name" value="MurA_subfamily"/>
</dbReference>
<dbReference type="InterPro" id="IPR013792">
    <property type="entry name" value="RNA3'P_cycl/enolpyr_Trfase_a/b"/>
</dbReference>
<dbReference type="InterPro" id="IPR005750">
    <property type="entry name" value="UDP_GlcNAc_COvinyl_MurA"/>
</dbReference>
<dbReference type="NCBIfam" id="TIGR01072">
    <property type="entry name" value="murA"/>
    <property type="match status" value="1"/>
</dbReference>
<dbReference type="NCBIfam" id="NF006873">
    <property type="entry name" value="PRK09369.1"/>
    <property type="match status" value="1"/>
</dbReference>
<dbReference type="NCBIfam" id="NF009470">
    <property type="entry name" value="PRK12830.1"/>
    <property type="match status" value="1"/>
</dbReference>
<dbReference type="PANTHER" id="PTHR43783">
    <property type="entry name" value="UDP-N-ACETYLGLUCOSAMINE 1-CARBOXYVINYLTRANSFERASE"/>
    <property type="match status" value="1"/>
</dbReference>
<dbReference type="PANTHER" id="PTHR43783:SF1">
    <property type="entry name" value="UDP-N-ACETYLGLUCOSAMINE 1-CARBOXYVINYLTRANSFERASE"/>
    <property type="match status" value="1"/>
</dbReference>
<dbReference type="Pfam" id="PF00275">
    <property type="entry name" value="EPSP_synthase"/>
    <property type="match status" value="1"/>
</dbReference>
<dbReference type="SUPFAM" id="SSF55205">
    <property type="entry name" value="EPT/RTPC-like"/>
    <property type="match status" value="1"/>
</dbReference>
<accession>Q8RD88</accession>
<keyword id="KW-0131">Cell cycle</keyword>
<keyword id="KW-0132">Cell division</keyword>
<keyword id="KW-0133">Cell shape</keyword>
<keyword id="KW-0961">Cell wall biogenesis/degradation</keyword>
<keyword id="KW-0963">Cytoplasm</keyword>
<keyword id="KW-0573">Peptidoglycan synthesis</keyword>
<keyword id="KW-0670">Pyruvate</keyword>
<keyword id="KW-1185">Reference proteome</keyword>
<keyword id="KW-0808">Transferase</keyword>
<proteinExistence type="inferred from homology"/>